<sequence length="355" mass="38998">MTALKNDRFLRALLKQPVDVTPVWMMRQAGRYLPEYRASRANAGDFMSLCMNPEFACEVTMQPLDRYPQLDAAILFSDILTIPDAMGQGLYFETGEGPRFKKVVSTLADIEALPIPDPHKDLGYVMDAVSTIRRELNGRVPLIGFSGSPWTLATYMVEGGSSKDFRKTKAMLYDNPQAMHLLLDKLAQSVTSYLNGQIMAGAQAVQIFDTWGGNLSAAAYQEFSLAYMRKIVSGLIREHEGRKVPVILFTKGGGLWLESIADAGADALGLDWTCDIGEARRRVGGQVALQGNMDPTVLYAKPEAIRTEVGRILASYGKGTGHVFNLGHGITPEVNPEHAGAFLRAVHELSAQYHE</sequence>
<protein>
    <recommendedName>
        <fullName evidence="1">Uroporphyrinogen decarboxylase</fullName>
        <shortName evidence="1">UPD</shortName>
        <shortName evidence="1">URO-D</shortName>
        <ecNumber evidence="1">4.1.1.37</ecNumber>
    </recommendedName>
</protein>
<proteinExistence type="inferred from homology"/>
<comment type="function">
    <text evidence="1">Catalyzes the decarboxylation of four acetate groups of uroporphyrinogen-III to yield coproporphyrinogen-III.</text>
</comment>
<comment type="catalytic activity">
    <reaction evidence="1">
        <text>uroporphyrinogen III + 4 H(+) = coproporphyrinogen III + 4 CO2</text>
        <dbReference type="Rhea" id="RHEA:19865"/>
        <dbReference type="ChEBI" id="CHEBI:15378"/>
        <dbReference type="ChEBI" id="CHEBI:16526"/>
        <dbReference type="ChEBI" id="CHEBI:57308"/>
        <dbReference type="ChEBI" id="CHEBI:57309"/>
        <dbReference type="EC" id="4.1.1.37"/>
    </reaction>
</comment>
<comment type="pathway">
    <text evidence="1">Porphyrin-containing compound metabolism; protoporphyrin-IX biosynthesis; coproporphyrinogen-III from 5-aminolevulinate: step 4/4.</text>
</comment>
<comment type="subunit">
    <text evidence="1">Homodimer.</text>
</comment>
<comment type="subcellular location">
    <subcellularLocation>
        <location evidence="1">Cytoplasm</location>
    </subcellularLocation>
</comment>
<comment type="similarity">
    <text evidence="1">Belongs to the uroporphyrinogen decarboxylase family.</text>
</comment>
<feature type="chain" id="PRO_1000204237" description="Uroporphyrinogen decarboxylase">
    <location>
        <begin position="1"/>
        <end position="355"/>
    </location>
</feature>
<feature type="binding site" evidence="1">
    <location>
        <begin position="27"/>
        <end position="31"/>
    </location>
    <ligand>
        <name>substrate</name>
    </ligand>
</feature>
<feature type="binding site" evidence="1">
    <location>
        <position position="78"/>
    </location>
    <ligand>
        <name>substrate</name>
    </ligand>
</feature>
<feature type="binding site" evidence="1">
    <location>
        <position position="155"/>
    </location>
    <ligand>
        <name>substrate</name>
    </ligand>
</feature>
<feature type="binding site" evidence="1">
    <location>
        <position position="210"/>
    </location>
    <ligand>
        <name>substrate</name>
    </ligand>
</feature>
<feature type="binding site" evidence="1">
    <location>
        <position position="328"/>
    </location>
    <ligand>
        <name>substrate</name>
    </ligand>
</feature>
<feature type="site" description="Transition state stabilizer" evidence="1">
    <location>
        <position position="78"/>
    </location>
</feature>
<evidence type="ECO:0000255" key="1">
    <source>
        <dbReference type="HAMAP-Rule" id="MF_00218"/>
    </source>
</evidence>
<name>DCUP_PSEFS</name>
<organism>
    <name type="scientific">Pseudomonas fluorescens (strain SBW25)</name>
    <dbReference type="NCBI Taxonomy" id="216595"/>
    <lineage>
        <taxon>Bacteria</taxon>
        <taxon>Pseudomonadati</taxon>
        <taxon>Pseudomonadota</taxon>
        <taxon>Gammaproteobacteria</taxon>
        <taxon>Pseudomonadales</taxon>
        <taxon>Pseudomonadaceae</taxon>
        <taxon>Pseudomonas</taxon>
    </lineage>
</organism>
<accession>C3KBH3</accession>
<dbReference type="EC" id="4.1.1.37" evidence="1"/>
<dbReference type="EMBL" id="AM181176">
    <property type="protein sequence ID" value="CAY46693.1"/>
    <property type="molecule type" value="Genomic_DNA"/>
</dbReference>
<dbReference type="RefSeq" id="WP_012721820.1">
    <property type="nucleotide sequence ID" value="NC_012660.1"/>
</dbReference>
<dbReference type="SMR" id="C3KBH3"/>
<dbReference type="STRING" id="294.SRM1_00468"/>
<dbReference type="PATRIC" id="fig|216595.4.peg.653"/>
<dbReference type="eggNOG" id="COG0407">
    <property type="taxonomic scope" value="Bacteria"/>
</dbReference>
<dbReference type="HOGENOM" id="CLU_040933_0_0_6"/>
<dbReference type="OrthoDB" id="9806656at2"/>
<dbReference type="UniPathway" id="UPA00251">
    <property type="reaction ID" value="UER00321"/>
</dbReference>
<dbReference type="GO" id="GO:0005829">
    <property type="term" value="C:cytosol"/>
    <property type="evidence" value="ECO:0007669"/>
    <property type="project" value="TreeGrafter"/>
</dbReference>
<dbReference type="GO" id="GO:0004853">
    <property type="term" value="F:uroporphyrinogen decarboxylase activity"/>
    <property type="evidence" value="ECO:0007669"/>
    <property type="project" value="UniProtKB-UniRule"/>
</dbReference>
<dbReference type="GO" id="GO:0019353">
    <property type="term" value="P:protoporphyrinogen IX biosynthetic process from glutamate"/>
    <property type="evidence" value="ECO:0007669"/>
    <property type="project" value="TreeGrafter"/>
</dbReference>
<dbReference type="CDD" id="cd00717">
    <property type="entry name" value="URO-D"/>
    <property type="match status" value="1"/>
</dbReference>
<dbReference type="FunFam" id="3.20.20.210:FF:000001">
    <property type="entry name" value="Uroporphyrinogen decarboxylase"/>
    <property type="match status" value="1"/>
</dbReference>
<dbReference type="Gene3D" id="3.20.20.210">
    <property type="match status" value="1"/>
</dbReference>
<dbReference type="HAMAP" id="MF_00218">
    <property type="entry name" value="URO_D"/>
    <property type="match status" value="1"/>
</dbReference>
<dbReference type="InterPro" id="IPR038071">
    <property type="entry name" value="UROD/MetE-like_sf"/>
</dbReference>
<dbReference type="InterPro" id="IPR006361">
    <property type="entry name" value="Uroporphyrinogen_deCO2ase_HemE"/>
</dbReference>
<dbReference type="InterPro" id="IPR000257">
    <property type="entry name" value="Uroporphyrinogen_deCOase"/>
</dbReference>
<dbReference type="NCBIfam" id="TIGR01464">
    <property type="entry name" value="hemE"/>
    <property type="match status" value="1"/>
</dbReference>
<dbReference type="PANTHER" id="PTHR21091">
    <property type="entry name" value="METHYLTETRAHYDROFOLATE:HOMOCYSTEINE METHYLTRANSFERASE RELATED"/>
    <property type="match status" value="1"/>
</dbReference>
<dbReference type="PANTHER" id="PTHR21091:SF169">
    <property type="entry name" value="UROPORPHYRINOGEN DECARBOXYLASE"/>
    <property type="match status" value="1"/>
</dbReference>
<dbReference type="Pfam" id="PF01208">
    <property type="entry name" value="URO-D"/>
    <property type="match status" value="1"/>
</dbReference>
<dbReference type="SUPFAM" id="SSF51726">
    <property type="entry name" value="UROD/MetE-like"/>
    <property type="match status" value="1"/>
</dbReference>
<dbReference type="PROSITE" id="PS00906">
    <property type="entry name" value="UROD_1"/>
    <property type="match status" value="1"/>
</dbReference>
<dbReference type="PROSITE" id="PS00907">
    <property type="entry name" value="UROD_2"/>
    <property type="match status" value="1"/>
</dbReference>
<keyword id="KW-0963">Cytoplasm</keyword>
<keyword id="KW-0210">Decarboxylase</keyword>
<keyword id="KW-0456">Lyase</keyword>
<keyword id="KW-0627">Porphyrin biosynthesis</keyword>
<reference key="1">
    <citation type="journal article" date="2009" name="Genome Biol.">
        <title>Genomic and genetic analyses of diversity and plant interactions of Pseudomonas fluorescens.</title>
        <authorList>
            <person name="Silby M.W."/>
            <person name="Cerdeno-Tarraga A.M."/>
            <person name="Vernikos G.S."/>
            <person name="Giddens S.R."/>
            <person name="Jackson R.W."/>
            <person name="Preston G.M."/>
            <person name="Zhang X.-X."/>
            <person name="Moon C.D."/>
            <person name="Gehrig S.M."/>
            <person name="Godfrey S.A.C."/>
            <person name="Knight C.G."/>
            <person name="Malone J.G."/>
            <person name="Robinson Z."/>
            <person name="Spiers A.J."/>
            <person name="Harris S."/>
            <person name="Challis G.L."/>
            <person name="Yaxley A.M."/>
            <person name="Harris D."/>
            <person name="Seeger K."/>
            <person name="Murphy L."/>
            <person name="Rutter S."/>
            <person name="Squares R."/>
            <person name="Quail M.A."/>
            <person name="Saunders E."/>
            <person name="Mavromatis K."/>
            <person name="Brettin T.S."/>
            <person name="Bentley S.D."/>
            <person name="Hothersall J."/>
            <person name="Stephens E."/>
            <person name="Thomas C.M."/>
            <person name="Parkhill J."/>
            <person name="Levy S.B."/>
            <person name="Rainey P.B."/>
            <person name="Thomson N.R."/>
        </authorList>
    </citation>
    <scope>NUCLEOTIDE SEQUENCE [LARGE SCALE GENOMIC DNA]</scope>
    <source>
        <strain>SBW25</strain>
    </source>
</reference>
<gene>
    <name evidence="1" type="primary">hemE</name>
    <name type="ordered locus">PFLU_0416</name>
</gene>